<comment type="subcellular location">
    <subcellularLocation>
        <location>Plastid</location>
        <location>Chloroplast</location>
    </subcellularLocation>
</comment>
<comment type="similarity">
    <text evidence="1">Belongs to the bacterial ribosomal protein bL36 family.</text>
</comment>
<dbReference type="EMBL" id="DQ887676">
    <property type="protein sequence ID" value="ABH88330.1"/>
    <property type="molecule type" value="Genomic_DNA"/>
</dbReference>
<dbReference type="RefSeq" id="YP_784420.1">
    <property type="nucleotide sequence ID" value="NC_008456.1"/>
</dbReference>
<dbReference type="SMR" id="Q06GW3"/>
<dbReference type="GeneID" id="4363606"/>
<dbReference type="GO" id="GO:0009507">
    <property type="term" value="C:chloroplast"/>
    <property type="evidence" value="ECO:0007669"/>
    <property type="project" value="UniProtKB-SubCell"/>
</dbReference>
<dbReference type="GO" id="GO:1990904">
    <property type="term" value="C:ribonucleoprotein complex"/>
    <property type="evidence" value="ECO:0007669"/>
    <property type="project" value="UniProtKB-KW"/>
</dbReference>
<dbReference type="GO" id="GO:0005840">
    <property type="term" value="C:ribosome"/>
    <property type="evidence" value="ECO:0007669"/>
    <property type="project" value="UniProtKB-KW"/>
</dbReference>
<dbReference type="GO" id="GO:0003735">
    <property type="term" value="F:structural constituent of ribosome"/>
    <property type="evidence" value="ECO:0007669"/>
    <property type="project" value="InterPro"/>
</dbReference>
<dbReference type="GO" id="GO:0006412">
    <property type="term" value="P:translation"/>
    <property type="evidence" value="ECO:0007669"/>
    <property type="project" value="UniProtKB-UniRule"/>
</dbReference>
<dbReference type="HAMAP" id="MF_00251">
    <property type="entry name" value="Ribosomal_bL36"/>
    <property type="match status" value="1"/>
</dbReference>
<dbReference type="InterPro" id="IPR000473">
    <property type="entry name" value="Ribosomal_bL36"/>
</dbReference>
<dbReference type="InterPro" id="IPR035977">
    <property type="entry name" value="Ribosomal_bL36_sp"/>
</dbReference>
<dbReference type="NCBIfam" id="TIGR01022">
    <property type="entry name" value="rpmJ_bact"/>
    <property type="match status" value="1"/>
</dbReference>
<dbReference type="PANTHER" id="PTHR42888">
    <property type="entry name" value="50S RIBOSOMAL PROTEIN L36, CHLOROPLASTIC"/>
    <property type="match status" value="1"/>
</dbReference>
<dbReference type="PANTHER" id="PTHR42888:SF1">
    <property type="entry name" value="LARGE RIBOSOMAL SUBUNIT PROTEIN BL36C"/>
    <property type="match status" value="1"/>
</dbReference>
<dbReference type="Pfam" id="PF00444">
    <property type="entry name" value="Ribosomal_L36"/>
    <property type="match status" value="1"/>
</dbReference>
<dbReference type="SUPFAM" id="SSF57840">
    <property type="entry name" value="Ribosomal protein L36"/>
    <property type="match status" value="1"/>
</dbReference>
<dbReference type="PROSITE" id="PS00828">
    <property type="entry name" value="RIBOSOMAL_L36"/>
    <property type="match status" value="1"/>
</dbReference>
<organism>
    <name type="scientific">Drimys granadensis</name>
    <dbReference type="NCBI Taxonomy" id="224735"/>
    <lineage>
        <taxon>Eukaryota</taxon>
        <taxon>Viridiplantae</taxon>
        <taxon>Streptophyta</taxon>
        <taxon>Embryophyta</taxon>
        <taxon>Tracheophyta</taxon>
        <taxon>Spermatophyta</taxon>
        <taxon>Magnoliopsida</taxon>
        <taxon>Magnoliidae</taxon>
        <taxon>Canellales</taxon>
        <taxon>Winteraceae</taxon>
        <taxon>Drimys</taxon>
    </lineage>
</organism>
<gene>
    <name evidence="1" type="primary">rpl36</name>
</gene>
<name>RK36_DRIGR</name>
<feature type="chain" id="PRO_0000276815" description="Large ribosomal subunit protein bL36c">
    <location>
        <begin position="1"/>
        <end position="37"/>
    </location>
</feature>
<geneLocation type="chloroplast"/>
<protein>
    <recommendedName>
        <fullName evidence="1">Large ribosomal subunit protein bL36c</fullName>
    </recommendedName>
    <alternativeName>
        <fullName evidence="2">50S ribosomal protein L36, chloroplastic</fullName>
    </alternativeName>
</protein>
<evidence type="ECO:0000255" key="1">
    <source>
        <dbReference type="HAMAP-Rule" id="MF_00251"/>
    </source>
</evidence>
<evidence type="ECO:0000305" key="2"/>
<sequence length="37" mass="4521">MKIRASVRKICEKCRLIRRRGRIIVICFNPRHKQRQG</sequence>
<accession>Q06GW3</accession>
<reference key="1">
    <citation type="journal article" date="2006" name="BMC Evol. Biol.">
        <title>Complete plastid genome sequences of Drimys, Liriodendron, and Piper: implications for the phylogenetic relationships of magnoliids.</title>
        <authorList>
            <person name="Cai Z."/>
            <person name="Penaflor C."/>
            <person name="Kuehl J.V."/>
            <person name="Leebens-Mack J."/>
            <person name="Carlson J.E."/>
            <person name="dePamphilis C.W."/>
            <person name="Boore J.L."/>
            <person name="Jansen R.K."/>
        </authorList>
    </citation>
    <scope>NUCLEOTIDE SEQUENCE [LARGE SCALE GENOMIC DNA]</scope>
</reference>
<keyword id="KW-0150">Chloroplast</keyword>
<keyword id="KW-0934">Plastid</keyword>
<keyword id="KW-0687">Ribonucleoprotein</keyword>
<keyword id="KW-0689">Ribosomal protein</keyword>
<proteinExistence type="inferred from homology"/>